<gene>
    <name type="ordered locus">ASA_3165</name>
</gene>
<reference key="1">
    <citation type="journal article" date="2008" name="BMC Genomics">
        <title>The genome of Aeromonas salmonicida subsp. salmonicida A449: insights into the evolution of a fish pathogen.</title>
        <authorList>
            <person name="Reith M.E."/>
            <person name="Singh R.K."/>
            <person name="Curtis B."/>
            <person name="Boyd J.M."/>
            <person name="Bouevitch A."/>
            <person name="Kimball J."/>
            <person name="Munholland J."/>
            <person name="Murphy C."/>
            <person name="Sarty D."/>
            <person name="Williams J."/>
            <person name="Nash J.H."/>
            <person name="Johnson S.C."/>
            <person name="Brown L.L."/>
        </authorList>
    </citation>
    <scope>NUCLEOTIDE SEQUENCE [LARGE SCALE GENOMIC DNA]</scope>
    <source>
        <strain>A449</strain>
    </source>
</reference>
<proteinExistence type="inferred from homology"/>
<comment type="similarity">
    <text evidence="1">Belongs to the UPF0325 family.</text>
</comment>
<dbReference type="EMBL" id="CP000644">
    <property type="protein sequence ID" value="ABO91158.1"/>
    <property type="molecule type" value="Genomic_DNA"/>
</dbReference>
<dbReference type="RefSeq" id="WP_005312064.1">
    <property type="nucleotide sequence ID" value="NC_009348.1"/>
</dbReference>
<dbReference type="SMR" id="A4SQI6"/>
<dbReference type="STRING" id="29491.GCA_000820065_03545"/>
<dbReference type="KEGG" id="asa:ASA_3165"/>
<dbReference type="eggNOG" id="ENOG502ZBV4">
    <property type="taxonomic scope" value="Bacteria"/>
</dbReference>
<dbReference type="HOGENOM" id="CLU_136774_0_0_6"/>
<dbReference type="Proteomes" id="UP000000225">
    <property type="component" value="Chromosome"/>
</dbReference>
<dbReference type="HAMAP" id="MF_01519">
    <property type="entry name" value="UPF0325"/>
    <property type="match status" value="1"/>
</dbReference>
<dbReference type="InterPro" id="IPR020911">
    <property type="entry name" value="UPF0325"/>
</dbReference>
<dbReference type="NCBIfam" id="NF010213">
    <property type="entry name" value="PRK13677.1"/>
    <property type="match status" value="1"/>
</dbReference>
<dbReference type="Pfam" id="PF11944">
    <property type="entry name" value="DUF3461"/>
    <property type="match status" value="1"/>
</dbReference>
<protein>
    <recommendedName>
        <fullName evidence="1">UPF0325 protein ASA_3165</fullName>
    </recommendedName>
</protein>
<sequence length="127" mass="14980">MYENLKSLGIQEPTSVDSYTLRQEANHDILKIYFKKQKGEFFAKSVKFKYPRQRKTMLVDSGTHEYKDVTEINANLKYVVDELDNLTQGVHIQADPDIKQKILRDLRHLEKVVQNKISEIERDLEKL</sequence>
<organism>
    <name type="scientific">Aeromonas salmonicida (strain A449)</name>
    <dbReference type="NCBI Taxonomy" id="382245"/>
    <lineage>
        <taxon>Bacteria</taxon>
        <taxon>Pseudomonadati</taxon>
        <taxon>Pseudomonadota</taxon>
        <taxon>Gammaproteobacteria</taxon>
        <taxon>Aeromonadales</taxon>
        <taxon>Aeromonadaceae</taxon>
        <taxon>Aeromonas</taxon>
    </lineage>
</organism>
<feature type="chain" id="PRO_1000068615" description="UPF0325 protein ASA_3165">
    <location>
        <begin position="1"/>
        <end position="127"/>
    </location>
</feature>
<evidence type="ECO:0000255" key="1">
    <source>
        <dbReference type="HAMAP-Rule" id="MF_01519"/>
    </source>
</evidence>
<name>Y3165_AERS4</name>
<accession>A4SQI6</accession>